<reference key="1">
    <citation type="journal article" date="2000" name="Nature">
        <title>Sequence and analysis of chromosome 3 of the plant Arabidopsis thaliana.</title>
        <authorList>
            <person name="Salanoubat M."/>
            <person name="Lemcke K."/>
            <person name="Rieger M."/>
            <person name="Ansorge W."/>
            <person name="Unseld M."/>
            <person name="Fartmann B."/>
            <person name="Valle G."/>
            <person name="Bloecker H."/>
            <person name="Perez-Alonso M."/>
            <person name="Obermaier B."/>
            <person name="Delseny M."/>
            <person name="Boutry M."/>
            <person name="Grivell L.A."/>
            <person name="Mache R."/>
            <person name="Puigdomenech P."/>
            <person name="De Simone V."/>
            <person name="Choisne N."/>
            <person name="Artiguenave F."/>
            <person name="Robert C."/>
            <person name="Brottier P."/>
            <person name="Wincker P."/>
            <person name="Cattolico L."/>
            <person name="Weissenbach J."/>
            <person name="Saurin W."/>
            <person name="Quetier F."/>
            <person name="Schaefer M."/>
            <person name="Mueller-Auer S."/>
            <person name="Gabel C."/>
            <person name="Fuchs M."/>
            <person name="Benes V."/>
            <person name="Wurmbach E."/>
            <person name="Drzonek H."/>
            <person name="Erfle H."/>
            <person name="Jordan N."/>
            <person name="Bangert S."/>
            <person name="Wiedelmann R."/>
            <person name="Kranz H."/>
            <person name="Voss H."/>
            <person name="Holland R."/>
            <person name="Brandt P."/>
            <person name="Nyakatura G."/>
            <person name="Vezzi A."/>
            <person name="D'Angelo M."/>
            <person name="Pallavicini A."/>
            <person name="Toppo S."/>
            <person name="Simionati B."/>
            <person name="Conrad A."/>
            <person name="Hornischer K."/>
            <person name="Kauer G."/>
            <person name="Loehnert T.-H."/>
            <person name="Nordsiek G."/>
            <person name="Reichelt J."/>
            <person name="Scharfe M."/>
            <person name="Schoen O."/>
            <person name="Bargues M."/>
            <person name="Terol J."/>
            <person name="Climent J."/>
            <person name="Navarro P."/>
            <person name="Collado C."/>
            <person name="Perez-Perez A."/>
            <person name="Ottenwaelder B."/>
            <person name="Duchemin D."/>
            <person name="Cooke R."/>
            <person name="Laudie M."/>
            <person name="Berger-Llauro C."/>
            <person name="Purnelle B."/>
            <person name="Masuy D."/>
            <person name="de Haan M."/>
            <person name="Maarse A.C."/>
            <person name="Alcaraz J.-P."/>
            <person name="Cottet A."/>
            <person name="Casacuberta E."/>
            <person name="Monfort A."/>
            <person name="Argiriou A."/>
            <person name="Flores M."/>
            <person name="Liguori R."/>
            <person name="Vitale D."/>
            <person name="Mannhaupt G."/>
            <person name="Haase D."/>
            <person name="Schoof H."/>
            <person name="Rudd S."/>
            <person name="Zaccaria P."/>
            <person name="Mewes H.-W."/>
            <person name="Mayer K.F.X."/>
            <person name="Kaul S."/>
            <person name="Town C.D."/>
            <person name="Koo H.L."/>
            <person name="Tallon L.J."/>
            <person name="Jenkins J."/>
            <person name="Rooney T."/>
            <person name="Rizzo M."/>
            <person name="Walts A."/>
            <person name="Utterback T."/>
            <person name="Fujii C.Y."/>
            <person name="Shea T.P."/>
            <person name="Creasy T.H."/>
            <person name="Haas B."/>
            <person name="Maiti R."/>
            <person name="Wu D."/>
            <person name="Peterson J."/>
            <person name="Van Aken S."/>
            <person name="Pai G."/>
            <person name="Militscher J."/>
            <person name="Sellers P."/>
            <person name="Gill J.E."/>
            <person name="Feldblyum T.V."/>
            <person name="Preuss D."/>
            <person name="Lin X."/>
            <person name="Nierman W.C."/>
            <person name="Salzberg S.L."/>
            <person name="White O."/>
            <person name="Venter J.C."/>
            <person name="Fraser C.M."/>
            <person name="Kaneko T."/>
            <person name="Nakamura Y."/>
            <person name="Sato S."/>
            <person name="Kato T."/>
            <person name="Asamizu E."/>
            <person name="Sasamoto S."/>
            <person name="Kimura T."/>
            <person name="Idesawa K."/>
            <person name="Kawashima K."/>
            <person name="Kishida Y."/>
            <person name="Kiyokawa C."/>
            <person name="Kohara M."/>
            <person name="Matsumoto M."/>
            <person name="Matsuno A."/>
            <person name="Muraki A."/>
            <person name="Nakayama S."/>
            <person name="Nakazaki N."/>
            <person name="Shinpo S."/>
            <person name="Takeuchi C."/>
            <person name="Wada T."/>
            <person name="Watanabe A."/>
            <person name="Yamada M."/>
            <person name="Yasuda M."/>
            <person name="Tabata S."/>
        </authorList>
    </citation>
    <scope>NUCLEOTIDE SEQUENCE [LARGE SCALE GENOMIC DNA]</scope>
    <source>
        <strain>cv. Columbia</strain>
    </source>
</reference>
<reference key="2">
    <citation type="journal article" date="2017" name="Plant J.">
        <title>Araport11: a complete reannotation of the Arabidopsis thaliana reference genome.</title>
        <authorList>
            <person name="Cheng C.Y."/>
            <person name="Krishnakumar V."/>
            <person name="Chan A.P."/>
            <person name="Thibaud-Nissen F."/>
            <person name="Schobel S."/>
            <person name="Town C.D."/>
        </authorList>
    </citation>
    <scope>GENOME REANNOTATION</scope>
    <source>
        <strain>cv. Columbia</strain>
    </source>
</reference>
<reference key="3">
    <citation type="journal article" date="2004" name="Plant Cell">
        <title>Genome-wide analysis of Arabidopsis pentatricopeptide repeat proteins reveals their essential role in organelle biogenesis.</title>
        <authorList>
            <person name="Lurin C."/>
            <person name="Andres C."/>
            <person name="Aubourg S."/>
            <person name="Bellaoui M."/>
            <person name="Bitton F."/>
            <person name="Bruyere C."/>
            <person name="Caboche M."/>
            <person name="Debast C."/>
            <person name="Gualberto J."/>
            <person name="Hoffmann B."/>
            <person name="Lecharny A."/>
            <person name="Le Ret M."/>
            <person name="Martin-Magniette M.-L."/>
            <person name="Mireau H."/>
            <person name="Peeters N."/>
            <person name="Renou J.-P."/>
            <person name="Szurek B."/>
            <person name="Taconnat L."/>
            <person name="Small I."/>
        </authorList>
    </citation>
    <scope>GENE FAMILY</scope>
</reference>
<proteinExistence type="evidence at transcript level"/>
<accession>Q9SFV9</accession>
<evidence type="ECO:0000255" key="1"/>
<evidence type="ECO:0000305" key="2"/>
<gene>
    <name type="ordered locus">At3g07290</name>
    <name type="ORF">T1B9.4</name>
</gene>
<organism>
    <name type="scientific">Arabidopsis thaliana</name>
    <name type="common">Mouse-ear cress</name>
    <dbReference type="NCBI Taxonomy" id="3702"/>
    <lineage>
        <taxon>Eukaryota</taxon>
        <taxon>Viridiplantae</taxon>
        <taxon>Streptophyta</taxon>
        <taxon>Embryophyta</taxon>
        <taxon>Tracheophyta</taxon>
        <taxon>Spermatophyta</taxon>
        <taxon>Magnoliopsida</taxon>
        <taxon>eudicotyledons</taxon>
        <taxon>Gunneridae</taxon>
        <taxon>Pentapetalae</taxon>
        <taxon>rosids</taxon>
        <taxon>malvids</taxon>
        <taxon>Brassicales</taxon>
        <taxon>Brassicaceae</taxon>
        <taxon>Camelineae</taxon>
        <taxon>Arabidopsis</taxon>
    </lineage>
</organism>
<keyword id="KW-0496">Mitochondrion</keyword>
<keyword id="KW-1185">Reference proteome</keyword>
<keyword id="KW-0677">Repeat</keyword>
<keyword id="KW-0809">Transit peptide</keyword>
<name>PP218_ARATH</name>
<dbReference type="EMBL" id="AC012395">
    <property type="protein sequence ID" value="AAF20217.1"/>
    <property type="molecule type" value="Genomic_DNA"/>
</dbReference>
<dbReference type="EMBL" id="CP002686">
    <property type="protein sequence ID" value="AEE74523.1"/>
    <property type="molecule type" value="Genomic_DNA"/>
</dbReference>
<dbReference type="RefSeq" id="NP_187385.1">
    <property type="nucleotide sequence ID" value="NM_111609.2"/>
</dbReference>
<dbReference type="SMR" id="Q9SFV9"/>
<dbReference type="FunCoup" id="Q9SFV9">
    <property type="interactions" value="107"/>
</dbReference>
<dbReference type="STRING" id="3702.Q9SFV9"/>
<dbReference type="PaxDb" id="3702-AT3G07290.1"/>
<dbReference type="ProteomicsDB" id="248943"/>
<dbReference type="EnsemblPlants" id="AT3G07290.1">
    <property type="protein sequence ID" value="AT3G07290.1"/>
    <property type="gene ID" value="AT3G07290"/>
</dbReference>
<dbReference type="GeneID" id="819917"/>
<dbReference type="Gramene" id="AT3G07290.1">
    <property type="protein sequence ID" value="AT3G07290.1"/>
    <property type="gene ID" value="AT3G07290"/>
</dbReference>
<dbReference type="KEGG" id="ath:AT3G07290"/>
<dbReference type="Araport" id="AT3G07290"/>
<dbReference type="TAIR" id="AT3G07290"/>
<dbReference type="eggNOG" id="KOG4197">
    <property type="taxonomic scope" value="Eukaryota"/>
</dbReference>
<dbReference type="HOGENOM" id="CLU_002706_49_2_1"/>
<dbReference type="InParanoid" id="Q9SFV9"/>
<dbReference type="OMA" id="YVECLME"/>
<dbReference type="PhylomeDB" id="Q9SFV9"/>
<dbReference type="PRO" id="PR:Q9SFV9"/>
<dbReference type="Proteomes" id="UP000006548">
    <property type="component" value="Chromosome 3"/>
</dbReference>
<dbReference type="ExpressionAtlas" id="Q9SFV9">
    <property type="expression patterns" value="baseline and differential"/>
</dbReference>
<dbReference type="GO" id="GO:0005739">
    <property type="term" value="C:mitochondrion"/>
    <property type="evidence" value="ECO:0007669"/>
    <property type="project" value="UniProtKB-SubCell"/>
</dbReference>
<dbReference type="Gene3D" id="1.25.40.10">
    <property type="entry name" value="Tetratricopeptide repeat domain"/>
    <property type="match status" value="6"/>
</dbReference>
<dbReference type="InterPro" id="IPR002885">
    <property type="entry name" value="Pentatricopeptide_rpt"/>
</dbReference>
<dbReference type="InterPro" id="IPR050872">
    <property type="entry name" value="PPR_P_subfamily"/>
</dbReference>
<dbReference type="InterPro" id="IPR011990">
    <property type="entry name" value="TPR-like_helical_dom_sf"/>
</dbReference>
<dbReference type="NCBIfam" id="TIGR00756">
    <property type="entry name" value="PPR"/>
    <property type="match status" value="10"/>
</dbReference>
<dbReference type="PANTHER" id="PTHR46128">
    <property type="entry name" value="MITOCHONDRIAL GROUP I INTRON SPLICING FACTOR CCM1"/>
    <property type="match status" value="1"/>
</dbReference>
<dbReference type="PANTHER" id="PTHR46128:SF211">
    <property type="entry name" value="PENTACOTRIPEPTIDE-REPEAT REGION OF PRORP DOMAIN-CONTAINING PROTEIN"/>
    <property type="match status" value="1"/>
</dbReference>
<dbReference type="Pfam" id="PF01535">
    <property type="entry name" value="PPR"/>
    <property type="match status" value="2"/>
</dbReference>
<dbReference type="Pfam" id="PF12854">
    <property type="entry name" value="PPR_1"/>
    <property type="match status" value="2"/>
</dbReference>
<dbReference type="Pfam" id="PF13041">
    <property type="entry name" value="PPR_2"/>
    <property type="match status" value="4"/>
</dbReference>
<dbReference type="Pfam" id="PF13812">
    <property type="entry name" value="PPR_3"/>
    <property type="match status" value="1"/>
</dbReference>
<dbReference type="PROSITE" id="PS51375">
    <property type="entry name" value="PPR"/>
    <property type="match status" value="18"/>
</dbReference>
<sequence length="880" mass="98059">MLLIHIRSTRKILALGRHVFPSNAFFSVSSRPSLSSSDEVAAHDVASLLKTPNWEKNSSLKSLVSHMNPNVASQVISLQRSDNDICVRFFMWVCKHSSYCFDPTQKNQLLKLIVSSGLYRVAHAVIVALIKECSRCEKEMLKLMYCFDELREVFGFRLNYPCYSSLLMSLAKLDLGFLAYVTYRRMEADGFVVGMIDYRTIVNALCKNGYTEAAEMFMSKILKIGFVLDSHIGTSLLLGFCRGLNLRDALKVFDVMSKEVTCAPNSVSYSILIHGLCEVGRLEEAFGLKDQMGEKGCQPSTRTYTVLIKALCDRGLIDKAFNLFDEMIPRGCKPNVHTYTVLIDGLCRDGKIEEANGVCRKMVKDRIFPSVITYNALINGYCKDGRVVPAFELLTVMEKRACKPNVRTFNELMEGLCRVGKPYKAVHLLKRMLDNGLSPDIVSYNVLIDGLCREGHMNTAYKLLSSMNCFDIEPDCLTFTAIINAFCKQGKADVASAFLGLMLRKGISLDEVTGTTLIDGVCKVGKTRDALFILETLVKMRILTTPHSLNVILDMLSKGCKVKEELAMLGKINKLGLVPSVVTYTTLVDGLIRSGDITGSFRILELMKLSGCLPNVYPYTIIINGLCQFGRVEEAEKLLSAMQDSGVSPNHVTYTVMVKGYVNNGKLDRALETVRAMVERGYELNDRIYSSLLQGFVLSQKGIDNSEESTVSDIALRETDPECINELISVVEQLGGCISGLCIFLVTRLCKEGRTDESNDLVQNVLERGVFLEKAMDIIMESYCSKKKHTKCMELITLVLKSGFVPSFKSFCLVIQGLKKEGDAERARELVMELLTSNGVVEKSGVLTYVECLMEGDETGDCSEVIDLVDQLHCRERPTF</sequence>
<feature type="transit peptide" description="Mitochondrion" evidence="1">
    <location>
        <begin position="1"/>
        <end position="89"/>
    </location>
</feature>
<feature type="chain" id="PRO_0000356077" description="Pentatricopeptide repeat-containing protein At3g07290, mitochondrial">
    <location>
        <begin position="90"/>
        <end position="880"/>
    </location>
</feature>
<feature type="repeat" description="PPR 1">
    <location>
        <begin position="159"/>
        <end position="193"/>
    </location>
</feature>
<feature type="repeat" description="PPR 2">
    <location>
        <begin position="194"/>
        <end position="228"/>
    </location>
</feature>
<feature type="repeat" description="PPR 3">
    <location>
        <begin position="229"/>
        <end position="259"/>
    </location>
</feature>
<feature type="repeat" description="PPR 4">
    <location>
        <begin position="265"/>
        <end position="299"/>
    </location>
</feature>
<feature type="repeat" description="PPR 5">
    <location>
        <begin position="300"/>
        <end position="334"/>
    </location>
</feature>
<feature type="repeat" description="PPR 6">
    <location>
        <begin position="335"/>
        <end position="369"/>
    </location>
</feature>
<feature type="repeat" description="PPR 7">
    <location>
        <begin position="370"/>
        <end position="404"/>
    </location>
</feature>
<feature type="repeat" description="PPR 8">
    <location>
        <begin position="405"/>
        <end position="439"/>
    </location>
</feature>
<feature type="repeat" description="PPR 9">
    <location>
        <begin position="440"/>
        <end position="474"/>
    </location>
</feature>
<feature type="repeat" description="PPR 10">
    <location>
        <begin position="475"/>
        <end position="509"/>
    </location>
</feature>
<feature type="repeat" description="PPR 11">
    <location>
        <begin position="510"/>
        <end position="544"/>
    </location>
</feature>
<feature type="repeat" description="PPR 12">
    <location>
        <begin position="545"/>
        <end position="579"/>
    </location>
</feature>
<feature type="repeat" description="PPR 13">
    <location>
        <begin position="580"/>
        <end position="614"/>
    </location>
</feature>
<feature type="repeat" description="PPR 14">
    <location>
        <begin position="615"/>
        <end position="649"/>
    </location>
</feature>
<feature type="repeat" description="PPR 15">
    <location>
        <begin position="650"/>
        <end position="684"/>
    </location>
</feature>
<feature type="repeat" description="PPR 16">
    <location>
        <begin position="685"/>
        <end position="721"/>
    </location>
</feature>
<feature type="repeat" description="PPR 17">
    <location>
        <begin position="738"/>
        <end position="768"/>
    </location>
</feature>
<feature type="repeat" description="PPR 18">
    <location>
        <begin position="772"/>
        <end position="806"/>
    </location>
</feature>
<feature type="repeat" description="PPR 19">
    <location>
        <begin position="807"/>
        <end position="842"/>
    </location>
</feature>
<protein>
    <recommendedName>
        <fullName>Pentatricopeptide repeat-containing protein At3g07290, mitochondrial</fullName>
    </recommendedName>
</protein>
<comment type="subcellular location">
    <subcellularLocation>
        <location evidence="2">Mitochondrion</location>
    </subcellularLocation>
</comment>
<comment type="similarity">
    <text evidence="2">Belongs to the PPR family. P subfamily.</text>
</comment>
<comment type="online information" name="Pentatricopeptide repeat proteins">
    <link uri="https://ppr.plantenergy.uwa.edu.au"/>
</comment>